<reference key="1">
    <citation type="journal article" date="1996" name="Genetics">
        <title>Effects of character weighting and species sampling on phylogeny reconstruction: a case study based on DNA sequence data in cetaceans.</title>
        <authorList>
            <person name="Milinkovitch M.C."/>
            <person name="LeDuc R.G."/>
            <person name="Adachi J."/>
            <person name="Farnir F."/>
            <person name="Georges M."/>
            <person name="Hasegawa M."/>
        </authorList>
    </citation>
    <scope>NUCLEOTIDE SEQUENCE [GENOMIC DNA]</scope>
</reference>
<reference key="2">
    <citation type="journal article" date="1994" name="Mol. Biol. Evol.">
        <title>Phylogeny of all major groups of cetaceans based on DNA sequences from three mitochondrial genes.</title>
        <authorList>
            <person name="Milinkovitch M.C."/>
            <person name="Meyer A."/>
            <person name="Powell J.R."/>
        </authorList>
    </citation>
    <scope>NUCLEOTIDE SEQUENCE [GENOMIC DNA] OF 1-134</scope>
</reference>
<accession>O03810</accession>
<accession>Q34829</accession>
<sequence length="379" mass="42774">MTNIRKTHPLMKIVNNAFIDLPTPSNISSWWNFGSLLGLCLITQILTGLFLAMHYTPDTTTAFSSITHICRDVNYGWVIRYLHANGASMFFICLYAHVGRGLYYGSYTFQETWNIGVVLLFTVMATAFVGYVLPWGQMSFWGATVITNLMSAIPYIGTTLVEWVWGGFSVDKATLTRFFAFHFILPFIILALAMVHLLFLHETGSNNPMGIPSDMDKIPFHPYYTIKDILGALLLISALLTLTLFAPDLLGDPDNYTPANPLSTPAHIKPEWYFLFAYAILRSIPNKLGGVLALLLSILILMLIPMLHTSKQRSMMFRPFSQFLFWTLVADLLTLTWIGGQPVEHPYVTLGQLASILYFLLILVLMPLTSLIENKLLKW</sequence>
<comment type="function">
    <text evidence="2">Component of the ubiquinol-cytochrome c reductase complex (complex III or cytochrome b-c1 complex) that is part of the mitochondrial respiratory chain. The b-c1 complex mediates electron transfer from ubiquinol to cytochrome c. Contributes to the generation of a proton gradient across the mitochondrial membrane that is then used for ATP synthesis.</text>
</comment>
<comment type="cofactor">
    <cofactor evidence="2">
        <name>heme b</name>
        <dbReference type="ChEBI" id="CHEBI:60344"/>
    </cofactor>
    <text evidence="2">Binds 2 heme b groups non-covalently.</text>
</comment>
<comment type="subunit">
    <text evidence="2">The cytochrome bc1 complex contains 11 subunits: 3 respiratory subunits (MT-CYB, CYC1 and UQCRFS1), 2 core proteins (UQCRC1 and UQCRC2) and 6 low-molecular weight proteins (UQCRH/QCR6, UQCRB/QCR7, UQCRQ/QCR8, UQCR10/QCR9, UQCR11/QCR10 and a cleavage product of UQCRFS1). This cytochrome bc1 complex then forms a dimer.</text>
</comment>
<comment type="subcellular location">
    <subcellularLocation>
        <location evidence="2">Mitochondrion inner membrane</location>
        <topology evidence="2">Multi-pass membrane protein</topology>
    </subcellularLocation>
</comment>
<comment type="miscellaneous">
    <text evidence="1">Heme 1 (or BL or b562) is low-potential and absorbs at about 562 nm, and heme 2 (or BH or b566) is high-potential and absorbs at about 566 nm.</text>
</comment>
<comment type="similarity">
    <text evidence="3 4">Belongs to the cytochrome b family.</text>
</comment>
<comment type="caution">
    <text evidence="2">The full-length protein contains only eight transmembrane helices, not nine as predicted by bioinformatics tools.</text>
</comment>
<proteinExistence type="inferred from homology"/>
<feature type="chain" id="PRO_0000061071" description="Cytochrome b">
    <location>
        <begin position="1"/>
        <end position="379"/>
    </location>
</feature>
<feature type="transmembrane region" description="Helical" evidence="2">
    <location>
        <begin position="33"/>
        <end position="53"/>
    </location>
</feature>
<feature type="transmembrane region" description="Helical" evidence="2">
    <location>
        <begin position="77"/>
        <end position="98"/>
    </location>
</feature>
<feature type="transmembrane region" description="Helical" evidence="2">
    <location>
        <begin position="113"/>
        <end position="133"/>
    </location>
</feature>
<feature type="transmembrane region" description="Helical" evidence="2">
    <location>
        <begin position="178"/>
        <end position="198"/>
    </location>
</feature>
<feature type="transmembrane region" description="Helical" evidence="2">
    <location>
        <begin position="226"/>
        <end position="246"/>
    </location>
</feature>
<feature type="transmembrane region" description="Helical" evidence="2">
    <location>
        <begin position="288"/>
        <end position="308"/>
    </location>
</feature>
<feature type="transmembrane region" description="Helical" evidence="2">
    <location>
        <begin position="320"/>
        <end position="340"/>
    </location>
</feature>
<feature type="transmembrane region" description="Helical" evidence="2">
    <location>
        <begin position="347"/>
        <end position="367"/>
    </location>
</feature>
<feature type="binding site" description="axial binding residue" evidence="2">
    <location>
        <position position="83"/>
    </location>
    <ligand>
        <name>heme b</name>
        <dbReference type="ChEBI" id="CHEBI:60344"/>
        <label>b562</label>
    </ligand>
    <ligandPart>
        <name>Fe</name>
        <dbReference type="ChEBI" id="CHEBI:18248"/>
    </ligandPart>
</feature>
<feature type="binding site" description="axial binding residue" evidence="2">
    <location>
        <position position="97"/>
    </location>
    <ligand>
        <name>heme b</name>
        <dbReference type="ChEBI" id="CHEBI:60344"/>
        <label>b566</label>
    </ligand>
    <ligandPart>
        <name>Fe</name>
        <dbReference type="ChEBI" id="CHEBI:18248"/>
    </ligandPart>
</feature>
<feature type="binding site" description="axial binding residue" evidence="2">
    <location>
        <position position="182"/>
    </location>
    <ligand>
        <name>heme b</name>
        <dbReference type="ChEBI" id="CHEBI:60344"/>
        <label>b562</label>
    </ligand>
    <ligandPart>
        <name>Fe</name>
        <dbReference type="ChEBI" id="CHEBI:18248"/>
    </ligandPart>
</feature>
<feature type="binding site" description="axial binding residue" evidence="2">
    <location>
        <position position="196"/>
    </location>
    <ligand>
        <name>heme b</name>
        <dbReference type="ChEBI" id="CHEBI:60344"/>
        <label>b566</label>
    </ligand>
    <ligandPart>
        <name>Fe</name>
        <dbReference type="ChEBI" id="CHEBI:18248"/>
    </ligandPart>
</feature>
<feature type="binding site" evidence="2">
    <location>
        <position position="201"/>
    </location>
    <ligand>
        <name>a ubiquinone</name>
        <dbReference type="ChEBI" id="CHEBI:16389"/>
    </ligand>
</feature>
<gene>
    <name type="primary">MT-CYB</name>
    <name type="synonym">COB</name>
    <name type="synonym">CYTB</name>
    <name type="synonym">MTCYB</name>
</gene>
<name>CYB_KOGBR</name>
<dbReference type="EMBL" id="U72040">
    <property type="protein sequence ID" value="AAC31657.1"/>
    <property type="molecule type" value="Genomic_DNA"/>
</dbReference>
<dbReference type="EMBL" id="U13134">
    <property type="protein sequence ID" value="AAC48444.1"/>
    <property type="molecule type" value="Genomic_DNA"/>
</dbReference>
<dbReference type="RefSeq" id="NP_944671.1">
    <property type="nucleotide sequence ID" value="NC_005272.1"/>
</dbReference>
<dbReference type="SMR" id="O03810"/>
<dbReference type="GeneID" id="2658675"/>
<dbReference type="CTD" id="4519"/>
<dbReference type="OrthoDB" id="11592at9721"/>
<dbReference type="GO" id="GO:0005743">
    <property type="term" value="C:mitochondrial inner membrane"/>
    <property type="evidence" value="ECO:0007669"/>
    <property type="project" value="UniProtKB-SubCell"/>
</dbReference>
<dbReference type="GO" id="GO:0045275">
    <property type="term" value="C:respiratory chain complex III"/>
    <property type="evidence" value="ECO:0007669"/>
    <property type="project" value="InterPro"/>
</dbReference>
<dbReference type="GO" id="GO:0046872">
    <property type="term" value="F:metal ion binding"/>
    <property type="evidence" value="ECO:0007669"/>
    <property type="project" value="UniProtKB-KW"/>
</dbReference>
<dbReference type="GO" id="GO:0008121">
    <property type="term" value="F:ubiquinol-cytochrome-c reductase activity"/>
    <property type="evidence" value="ECO:0007669"/>
    <property type="project" value="InterPro"/>
</dbReference>
<dbReference type="GO" id="GO:0006122">
    <property type="term" value="P:mitochondrial electron transport, ubiquinol to cytochrome c"/>
    <property type="evidence" value="ECO:0007669"/>
    <property type="project" value="TreeGrafter"/>
</dbReference>
<dbReference type="CDD" id="cd00290">
    <property type="entry name" value="cytochrome_b_C"/>
    <property type="match status" value="1"/>
</dbReference>
<dbReference type="CDD" id="cd00284">
    <property type="entry name" value="Cytochrome_b_N"/>
    <property type="match status" value="1"/>
</dbReference>
<dbReference type="FunFam" id="1.20.810.10:FF:000002">
    <property type="entry name" value="Cytochrome b"/>
    <property type="match status" value="1"/>
</dbReference>
<dbReference type="Gene3D" id="1.20.810.10">
    <property type="entry name" value="Cytochrome Bc1 Complex, Chain C"/>
    <property type="match status" value="1"/>
</dbReference>
<dbReference type="InterPro" id="IPR005798">
    <property type="entry name" value="Cyt_b/b6_C"/>
</dbReference>
<dbReference type="InterPro" id="IPR036150">
    <property type="entry name" value="Cyt_b/b6_C_sf"/>
</dbReference>
<dbReference type="InterPro" id="IPR005797">
    <property type="entry name" value="Cyt_b/b6_N"/>
</dbReference>
<dbReference type="InterPro" id="IPR027387">
    <property type="entry name" value="Cytb/b6-like_sf"/>
</dbReference>
<dbReference type="InterPro" id="IPR030689">
    <property type="entry name" value="Cytochrome_b"/>
</dbReference>
<dbReference type="InterPro" id="IPR048260">
    <property type="entry name" value="Cytochrome_b_C_euk/bac"/>
</dbReference>
<dbReference type="InterPro" id="IPR048259">
    <property type="entry name" value="Cytochrome_b_N_euk/bac"/>
</dbReference>
<dbReference type="InterPro" id="IPR016174">
    <property type="entry name" value="Di-haem_cyt_TM"/>
</dbReference>
<dbReference type="PANTHER" id="PTHR19271">
    <property type="entry name" value="CYTOCHROME B"/>
    <property type="match status" value="1"/>
</dbReference>
<dbReference type="PANTHER" id="PTHR19271:SF16">
    <property type="entry name" value="CYTOCHROME B"/>
    <property type="match status" value="1"/>
</dbReference>
<dbReference type="Pfam" id="PF00032">
    <property type="entry name" value="Cytochrom_B_C"/>
    <property type="match status" value="1"/>
</dbReference>
<dbReference type="Pfam" id="PF00033">
    <property type="entry name" value="Cytochrome_B"/>
    <property type="match status" value="1"/>
</dbReference>
<dbReference type="PIRSF" id="PIRSF038885">
    <property type="entry name" value="COB"/>
    <property type="match status" value="1"/>
</dbReference>
<dbReference type="SUPFAM" id="SSF81648">
    <property type="entry name" value="a domain/subunit of cytochrome bc1 complex (Ubiquinol-cytochrome c reductase)"/>
    <property type="match status" value="1"/>
</dbReference>
<dbReference type="SUPFAM" id="SSF81342">
    <property type="entry name" value="Transmembrane di-heme cytochromes"/>
    <property type="match status" value="1"/>
</dbReference>
<dbReference type="PROSITE" id="PS51003">
    <property type="entry name" value="CYTB_CTER"/>
    <property type="match status" value="1"/>
</dbReference>
<dbReference type="PROSITE" id="PS51002">
    <property type="entry name" value="CYTB_NTER"/>
    <property type="match status" value="1"/>
</dbReference>
<organism>
    <name type="scientific">Kogia breviceps</name>
    <name type="common">Pygmy sperm whale</name>
    <name type="synonym">Physeter breviceps</name>
    <dbReference type="NCBI Taxonomy" id="27615"/>
    <lineage>
        <taxon>Eukaryota</taxon>
        <taxon>Metazoa</taxon>
        <taxon>Chordata</taxon>
        <taxon>Craniata</taxon>
        <taxon>Vertebrata</taxon>
        <taxon>Euteleostomi</taxon>
        <taxon>Mammalia</taxon>
        <taxon>Eutheria</taxon>
        <taxon>Laurasiatheria</taxon>
        <taxon>Artiodactyla</taxon>
        <taxon>Whippomorpha</taxon>
        <taxon>Cetacea</taxon>
        <taxon>Odontoceti</taxon>
        <taxon>Physeteridae</taxon>
        <taxon>Kogia</taxon>
    </lineage>
</organism>
<protein>
    <recommendedName>
        <fullName>Cytochrome b</fullName>
    </recommendedName>
    <alternativeName>
        <fullName>Complex III subunit 3</fullName>
    </alternativeName>
    <alternativeName>
        <fullName>Complex III subunit III</fullName>
    </alternativeName>
    <alternativeName>
        <fullName>Cytochrome b-c1 complex subunit 3</fullName>
    </alternativeName>
    <alternativeName>
        <fullName>Ubiquinol-cytochrome-c reductase complex cytochrome b subunit</fullName>
    </alternativeName>
</protein>
<evidence type="ECO:0000250" key="1"/>
<evidence type="ECO:0000250" key="2">
    <source>
        <dbReference type="UniProtKB" id="P00157"/>
    </source>
</evidence>
<evidence type="ECO:0000255" key="3">
    <source>
        <dbReference type="PROSITE-ProRule" id="PRU00967"/>
    </source>
</evidence>
<evidence type="ECO:0000255" key="4">
    <source>
        <dbReference type="PROSITE-ProRule" id="PRU00968"/>
    </source>
</evidence>
<geneLocation type="mitochondrion"/>
<keyword id="KW-0249">Electron transport</keyword>
<keyword id="KW-0349">Heme</keyword>
<keyword id="KW-0408">Iron</keyword>
<keyword id="KW-0472">Membrane</keyword>
<keyword id="KW-0479">Metal-binding</keyword>
<keyword id="KW-0496">Mitochondrion</keyword>
<keyword id="KW-0999">Mitochondrion inner membrane</keyword>
<keyword id="KW-0679">Respiratory chain</keyword>
<keyword id="KW-0812">Transmembrane</keyword>
<keyword id="KW-1133">Transmembrane helix</keyword>
<keyword id="KW-0813">Transport</keyword>
<keyword id="KW-0830">Ubiquinone</keyword>